<reference key="1">
    <citation type="submission" date="2004-08" db="EMBL/GenBank/DDBJ databases">
        <authorList>
            <consortium name="NIH - Xenopus Gene Collection (XGC) project"/>
        </authorList>
    </citation>
    <scope>NUCLEOTIDE SEQUENCE [LARGE SCALE MRNA]</scope>
    <source>
        <tissue>Eye</tissue>
    </source>
</reference>
<gene>
    <name type="primary">prmt6</name>
</gene>
<organism>
    <name type="scientific">Xenopus laevis</name>
    <name type="common">African clawed frog</name>
    <dbReference type="NCBI Taxonomy" id="8355"/>
    <lineage>
        <taxon>Eukaryota</taxon>
        <taxon>Metazoa</taxon>
        <taxon>Chordata</taxon>
        <taxon>Craniata</taxon>
        <taxon>Vertebrata</taxon>
        <taxon>Euteleostomi</taxon>
        <taxon>Amphibia</taxon>
        <taxon>Batrachia</taxon>
        <taxon>Anura</taxon>
        <taxon>Pipoidea</taxon>
        <taxon>Pipidae</taxon>
        <taxon>Xenopodinae</taxon>
        <taxon>Xenopus</taxon>
        <taxon>Xenopus</taxon>
    </lineage>
</organism>
<sequence length="340" mass="37915">MALLKKRKHERSEQDQEYFQCYSDVSIHEEMIADTVRTNGYKQAILHNHCALQGLTVLDVGAGTGILSVFCVQAGATRVYAVEASAVSQLASHVVTLNGMDNKVKVLNSPVESAEIPEQVDAIVSEWMGYALMYESMLPSVIYARDKWLKPGGIILPSAADLFIAPINDRVVESRLDFWNEVKGLYGVDMSCMRPFAHSCIMNKEMAVNLLSPEDVLSFPVRFASLDLNVCTQEEVRNLHGSFQFSCFGSSLLHGFALWFTVTFPGEKTVTLSTSPYGEETHWKQTLLYLDEEIQVEQDTDITGDITLSPSDVNPRHLRALLNYSIGGGLRRTKHFHMGT</sequence>
<feature type="chain" id="PRO_0000378151" description="Protein arginine N-methyltransferase 6">
    <location>
        <begin position="1"/>
        <end position="340"/>
    </location>
</feature>
<feature type="domain" description="SAM-dependent MTase PRMT-type" evidence="4">
    <location>
        <begin position="15"/>
        <end position="339"/>
    </location>
</feature>
<feature type="active site" evidence="1">
    <location>
        <position position="126"/>
    </location>
</feature>
<feature type="active site" evidence="1">
    <location>
        <position position="135"/>
    </location>
</feature>
<feature type="binding site" evidence="1">
    <location>
        <position position="28"/>
    </location>
    <ligand>
        <name>S-adenosyl-L-methionine</name>
        <dbReference type="ChEBI" id="CHEBI:59789"/>
    </ligand>
</feature>
<feature type="binding site" evidence="1">
    <location>
        <position position="37"/>
    </location>
    <ligand>
        <name>S-adenosyl-L-methionine</name>
        <dbReference type="ChEBI" id="CHEBI:59789"/>
    </ligand>
</feature>
<feature type="binding site" evidence="1">
    <location>
        <position position="61"/>
    </location>
    <ligand>
        <name>S-adenosyl-L-methionine</name>
        <dbReference type="ChEBI" id="CHEBI:59789"/>
    </ligand>
</feature>
<feature type="binding site" evidence="1">
    <location>
        <position position="83"/>
    </location>
    <ligand>
        <name>S-adenosyl-L-methionine</name>
        <dbReference type="ChEBI" id="CHEBI:59789"/>
    </ligand>
</feature>
<feature type="binding site" evidence="1">
    <location>
        <position position="112"/>
    </location>
    <ligand>
        <name>S-adenosyl-L-methionine</name>
        <dbReference type="ChEBI" id="CHEBI:59789"/>
    </ligand>
</feature>
<protein>
    <recommendedName>
        <fullName>Protein arginine N-methyltransferase 6</fullName>
        <ecNumber evidence="3">2.1.1.319</ecNumber>
    </recommendedName>
    <alternativeName>
        <fullName>Histone-arginine N-methyltransferase PRMT6</fullName>
    </alternativeName>
</protein>
<proteinExistence type="evidence at transcript level"/>
<comment type="function">
    <text evidence="2">Arginine methyltransferase that can catalyze the formation of both omega-N monomethylarginine (MMA) and asymmetrical dimethylarginine (aDMA), with a strong preference for the formation of aDMA. Preferentially methylates arginyl residues present in a glycine and arginine-rich domain and displays preference for monomethylated substrates. Specifically mediates the asymmetric dimethylation of histone H3 'Arg-2' to form H3R2me2a. H3R2me2a represents a specific tag for epigenetic transcriptional repression and is mutually exclusive with methylation on histone H3 'Lys-4' (H3K4me2 and H3K4me3). Acts as a transcriptional repressor of various genes such as HOXA2, THBS1 and TP53. Repression of TP53 blocks cellular senescence. Also methylates histone H2A and H4 'Arg-3' (H2AR3me and H4R3me, respectively). Acts as a regulator of DNA base excision during DNA repair by mediating the methylation of DNA polymerase beta (POLB), leading to the stimulation of its polymerase activity by enhancing DNA binding and processivity. Methylates HMGA1. Regulates alternative splicing events. Acts as a transcriptional coactivator of a number of steroid hormone receptors including ESR1, ESR2, PGR and NR3C1.</text>
</comment>
<comment type="catalytic activity">
    <reaction evidence="3">
        <text>L-arginyl-[protein] + 2 S-adenosyl-L-methionine = N(omega),N(omega)-dimethyl-L-arginyl-[protein] + 2 S-adenosyl-L-homocysteine + 2 H(+)</text>
        <dbReference type="Rhea" id="RHEA:48096"/>
        <dbReference type="Rhea" id="RHEA-COMP:10532"/>
        <dbReference type="Rhea" id="RHEA-COMP:11991"/>
        <dbReference type="ChEBI" id="CHEBI:15378"/>
        <dbReference type="ChEBI" id="CHEBI:29965"/>
        <dbReference type="ChEBI" id="CHEBI:57856"/>
        <dbReference type="ChEBI" id="CHEBI:59789"/>
        <dbReference type="ChEBI" id="CHEBI:61897"/>
        <dbReference type="EC" id="2.1.1.319"/>
    </reaction>
</comment>
<comment type="subcellular location">
    <subcellularLocation>
        <location evidence="3">Nucleus</location>
    </subcellularLocation>
</comment>
<comment type="similarity">
    <text evidence="4">Belongs to the class I-like SAM-binding methyltransferase superfamily. Protein arginine N-methyltransferase family. PRMT6 subfamily.</text>
</comment>
<name>ANM6_XENLA</name>
<dbReference type="EC" id="2.1.1.319" evidence="3"/>
<dbReference type="EMBL" id="BC080055">
    <property type="protein sequence ID" value="AAH80055.1"/>
    <property type="molecule type" value="mRNA"/>
</dbReference>
<dbReference type="RefSeq" id="NP_001087520.1">
    <property type="nucleotide sequence ID" value="NM_001094051.1"/>
</dbReference>
<dbReference type="SMR" id="Q68EZ3"/>
<dbReference type="DNASU" id="447344"/>
<dbReference type="GeneID" id="447344"/>
<dbReference type="KEGG" id="xla:447344"/>
<dbReference type="AGR" id="Xenbase:XB-GENE-6254002"/>
<dbReference type="CTD" id="447344"/>
<dbReference type="Xenbase" id="XB-GENE-6254002">
    <property type="gene designation" value="prmt6.S"/>
</dbReference>
<dbReference type="OMA" id="CIHVDYT"/>
<dbReference type="OrthoDB" id="7848332at2759"/>
<dbReference type="Proteomes" id="UP000186698">
    <property type="component" value="Chromosome 2S"/>
</dbReference>
<dbReference type="Bgee" id="447344">
    <property type="expression patterns" value="Expressed in oocyte and 19 other cell types or tissues"/>
</dbReference>
<dbReference type="GO" id="GO:0005634">
    <property type="term" value="C:nucleus"/>
    <property type="evidence" value="ECO:0000250"/>
    <property type="project" value="UniProtKB"/>
</dbReference>
<dbReference type="GO" id="GO:0042393">
    <property type="term" value="F:histone binding"/>
    <property type="evidence" value="ECO:0000250"/>
    <property type="project" value="UniProtKB"/>
</dbReference>
<dbReference type="GO" id="GO:0070612">
    <property type="term" value="F:histone H2AR3 methyltransferase activity"/>
    <property type="evidence" value="ECO:0000250"/>
    <property type="project" value="UniProtKB"/>
</dbReference>
<dbReference type="GO" id="GO:0070611">
    <property type="term" value="F:histone H3R2 methyltransferase activity"/>
    <property type="evidence" value="ECO:0000250"/>
    <property type="project" value="UniProtKB"/>
</dbReference>
<dbReference type="GO" id="GO:0044020">
    <property type="term" value="F:histone H4R3 methyltransferase activity"/>
    <property type="evidence" value="ECO:0000250"/>
    <property type="project" value="UniProtKB"/>
</dbReference>
<dbReference type="GO" id="GO:0042054">
    <property type="term" value="F:histone methyltransferase activity"/>
    <property type="evidence" value="ECO:0000250"/>
    <property type="project" value="UniProtKB"/>
</dbReference>
<dbReference type="GO" id="GO:0016274">
    <property type="term" value="F:protein-arginine N-methyltransferase activity"/>
    <property type="evidence" value="ECO:0000250"/>
    <property type="project" value="UniProtKB"/>
</dbReference>
<dbReference type="GO" id="GO:0035242">
    <property type="term" value="F:protein-arginine omega-N asymmetric methyltransferase activity"/>
    <property type="evidence" value="ECO:0000250"/>
    <property type="project" value="UniProtKB"/>
</dbReference>
<dbReference type="GO" id="GO:0035241">
    <property type="term" value="F:protein-arginine omega-N monomethyltransferase activity"/>
    <property type="evidence" value="ECO:0000250"/>
    <property type="project" value="UniProtKB"/>
</dbReference>
<dbReference type="GO" id="GO:0006338">
    <property type="term" value="P:chromatin remodeling"/>
    <property type="evidence" value="ECO:0000318"/>
    <property type="project" value="GO_Central"/>
</dbReference>
<dbReference type="GO" id="GO:0006281">
    <property type="term" value="P:DNA repair"/>
    <property type="evidence" value="ECO:0007669"/>
    <property type="project" value="UniProtKB-KW"/>
</dbReference>
<dbReference type="GO" id="GO:0032259">
    <property type="term" value="P:methylation"/>
    <property type="evidence" value="ECO:0007669"/>
    <property type="project" value="UniProtKB-KW"/>
</dbReference>
<dbReference type="GO" id="GO:0045892">
    <property type="term" value="P:negative regulation of DNA-templated transcription"/>
    <property type="evidence" value="ECO:0000250"/>
    <property type="project" value="UniProtKB"/>
</dbReference>
<dbReference type="GO" id="GO:2000059">
    <property type="term" value="P:negative regulation of ubiquitin-dependent protein catabolic process"/>
    <property type="evidence" value="ECO:0000250"/>
    <property type="project" value="UniProtKB"/>
</dbReference>
<dbReference type="GO" id="GO:0006355">
    <property type="term" value="P:regulation of DNA-templated transcription"/>
    <property type="evidence" value="ECO:0000318"/>
    <property type="project" value="GO_Central"/>
</dbReference>
<dbReference type="CDD" id="cd02440">
    <property type="entry name" value="AdoMet_MTases"/>
    <property type="match status" value="1"/>
</dbReference>
<dbReference type="FunFam" id="3.40.50.150:FF:000016">
    <property type="entry name" value="Protein arginine N-methyltransferase 6"/>
    <property type="match status" value="1"/>
</dbReference>
<dbReference type="FunFam" id="2.70.160.11:FF:000009">
    <property type="entry name" value="protein arginine N-methyltransferase 6"/>
    <property type="match status" value="1"/>
</dbReference>
<dbReference type="Gene3D" id="2.70.160.11">
    <property type="entry name" value="Hnrnp arginine n-methyltransferase1"/>
    <property type="match status" value="1"/>
</dbReference>
<dbReference type="Gene3D" id="3.40.50.150">
    <property type="entry name" value="Vaccinia Virus protein VP39"/>
    <property type="match status" value="1"/>
</dbReference>
<dbReference type="InterPro" id="IPR025799">
    <property type="entry name" value="Arg_MeTrfase"/>
</dbReference>
<dbReference type="InterPro" id="IPR055135">
    <property type="entry name" value="PRMT_dom"/>
</dbReference>
<dbReference type="InterPro" id="IPR029063">
    <property type="entry name" value="SAM-dependent_MTases_sf"/>
</dbReference>
<dbReference type="PANTHER" id="PTHR11006">
    <property type="entry name" value="PROTEIN ARGININE N-METHYLTRANSFERASE"/>
    <property type="match status" value="1"/>
</dbReference>
<dbReference type="PANTHER" id="PTHR11006:SF73">
    <property type="entry name" value="PROTEIN ARGININE N-METHYLTRANSFERASE 6"/>
    <property type="match status" value="1"/>
</dbReference>
<dbReference type="Pfam" id="PF06325">
    <property type="entry name" value="PrmA"/>
    <property type="match status" value="1"/>
</dbReference>
<dbReference type="Pfam" id="PF22528">
    <property type="entry name" value="PRMT_C"/>
    <property type="match status" value="1"/>
</dbReference>
<dbReference type="SUPFAM" id="SSF53335">
    <property type="entry name" value="S-adenosyl-L-methionine-dependent methyltransferases"/>
    <property type="match status" value="1"/>
</dbReference>
<dbReference type="PROSITE" id="PS51678">
    <property type="entry name" value="SAM_MT_PRMT"/>
    <property type="match status" value="1"/>
</dbReference>
<keyword id="KW-0156">Chromatin regulator</keyword>
<keyword id="KW-0227">DNA damage</keyword>
<keyword id="KW-0234">DNA repair</keyword>
<keyword id="KW-0488">Methylation</keyword>
<keyword id="KW-0489">Methyltransferase</keyword>
<keyword id="KW-0539">Nucleus</keyword>
<keyword id="KW-1185">Reference proteome</keyword>
<keyword id="KW-0678">Repressor</keyword>
<keyword id="KW-0949">S-adenosyl-L-methionine</keyword>
<keyword id="KW-0804">Transcription</keyword>
<keyword id="KW-0805">Transcription regulation</keyword>
<keyword id="KW-0808">Transferase</keyword>
<evidence type="ECO:0000250" key="1"/>
<evidence type="ECO:0000250" key="2">
    <source>
        <dbReference type="UniProtKB" id="Q6NZB1"/>
    </source>
</evidence>
<evidence type="ECO:0000250" key="3">
    <source>
        <dbReference type="UniProtKB" id="Q96LA8"/>
    </source>
</evidence>
<evidence type="ECO:0000255" key="4">
    <source>
        <dbReference type="PROSITE-ProRule" id="PRU01015"/>
    </source>
</evidence>
<accession>Q68EZ3</accession>